<reference key="1">
    <citation type="journal article" date="1979" name="Cell">
        <title>DNA sequence of the gene for the outer membrane lipoprotein of E. coli: an extremely AT-rich promoter.</title>
        <authorList>
            <person name="Nakamura K."/>
            <person name="Inouye M."/>
        </authorList>
    </citation>
    <scope>NUCLEOTIDE SEQUENCE [GENOMIC DNA]</scope>
    <source>
        <strain>B</strain>
    </source>
</reference>
<reference key="2">
    <citation type="journal article" date="1980" name="J. Biol. Chem.">
        <title>Messenger ribonucleic acid of the lipoprotein of the Escherichia coli outer membrane. II. The complete nucleotide sequence.</title>
        <authorList>
            <person name="Nakamura K."/>
            <person name="Pirtle R.M."/>
            <person name="Pirtle I.L."/>
            <person name="Takeishi K."/>
            <person name="Inouye M."/>
        </authorList>
    </citation>
    <scope>NUCLEOTIDE SEQUENCE [GENOMIC DNA]</scope>
</reference>
<reference key="3">
    <citation type="journal article" date="1996" name="DNA Res.">
        <title>A 570-kb DNA sequence of the Escherichia coli K-12 genome corresponding to the 28.0-40.1 min region on the linkage map.</title>
        <authorList>
            <person name="Aiba H."/>
            <person name="Baba T."/>
            <person name="Fujita K."/>
            <person name="Hayashi K."/>
            <person name="Inada T."/>
            <person name="Isono K."/>
            <person name="Itoh T."/>
            <person name="Kasai H."/>
            <person name="Kashimoto K."/>
            <person name="Kimura S."/>
            <person name="Kitakawa M."/>
            <person name="Kitagawa M."/>
            <person name="Makino K."/>
            <person name="Miki T."/>
            <person name="Mizobuchi K."/>
            <person name="Mori H."/>
            <person name="Mori T."/>
            <person name="Motomura K."/>
            <person name="Nakade S."/>
            <person name="Nakamura Y."/>
            <person name="Nashimoto H."/>
            <person name="Nishio Y."/>
            <person name="Oshima T."/>
            <person name="Saito N."/>
            <person name="Sampei G."/>
            <person name="Seki Y."/>
            <person name="Sivasundaram S."/>
            <person name="Tagami H."/>
            <person name="Takeda J."/>
            <person name="Takemoto K."/>
            <person name="Takeuchi Y."/>
            <person name="Wada C."/>
            <person name="Yamamoto Y."/>
            <person name="Horiuchi T."/>
        </authorList>
    </citation>
    <scope>NUCLEOTIDE SEQUENCE [LARGE SCALE GENOMIC DNA]</scope>
    <source>
        <strain>K12 / W3110 / ATCC 27325 / DSM 5911</strain>
    </source>
</reference>
<reference key="4">
    <citation type="journal article" date="1997" name="Science">
        <title>The complete genome sequence of Escherichia coli K-12.</title>
        <authorList>
            <person name="Blattner F.R."/>
            <person name="Plunkett G. III"/>
            <person name="Bloch C.A."/>
            <person name="Perna N.T."/>
            <person name="Burland V."/>
            <person name="Riley M."/>
            <person name="Collado-Vides J."/>
            <person name="Glasner J.D."/>
            <person name="Rode C.K."/>
            <person name="Mayhew G.F."/>
            <person name="Gregor J."/>
            <person name="Davis N.W."/>
            <person name="Kirkpatrick H.A."/>
            <person name="Goeden M.A."/>
            <person name="Rose D.J."/>
            <person name="Mau B."/>
            <person name="Shao Y."/>
        </authorList>
    </citation>
    <scope>NUCLEOTIDE SEQUENCE [LARGE SCALE GENOMIC DNA]</scope>
    <source>
        <strain>K12 / MG1655 / ATCC 47076</strain>
    </source>
</reference>
<reference key="5">
    <citation type="journal article" date="2006" name="Mol. Syst. Biol.">
        <title>Highly accurate genome sequences of Escherichia coli K-12 strains MG1655 and W3110.</title>
        <authorList>
            <person name="Hayashi K."/>
            <person name="Morooka N."/>
            <person name="Yamamoto Y."/>
            <person name="Fujita K."/>
            <person name="Isono K."/>
            <person name="Choi S."/>
            <person name="Ohtsubo E."/>
            <person name="Baba T."/>
            <person name="Wanner B.L."/>
            <person name="Mori H."/>
            <person name="Horiuchi T."/>
        </authorList>
    </citation>
    <scope>NUCLEOTIDE SEQUENCE [LARGE SCALE GENOMIC DNA]</scope>
    <source>
        <strain>K12 / W3110 / ATCC 27325 / DSM 5911</strain>
    </source>
</reference>
<reference key="6">
    <citation type="journal article" date="1977" name="Proc. Natl. Acad. Sci. U.S.A.">
        <title>Amino acid sequence for the peptide extension on the prolipoprotein of the Escherichia coli outer membrane.</title>
        <authorList>
            <person name="Inouye S."/>
            <person name="Wang S."/>
            <person name="Sekizawa J."/>
            <person name="Halegoua S."/>
            <person name="Inouye M."/>
        </authorList>
    </citation>
    <scope>PROTEIN SEQUENCE OF 1-20 (PRECURSOR PROTEIN)</scope>
    <scope>FORMYLATION AT MET-1</scope>
</reference>
<reference key="7">
    <citation type="journal article" date="1972" name="Eur. J. Biochem.">
        <title>Sequence of the murein-lipoprotein and the attachment site of the lipid.</title>
        <authorList>
            <person name="Braun V."/>
            <person name="Bosch V."/>
        </authorList>
    </citation>
    <scope>PROTEIN SEQUENCE OF 21-78</scope>
    <scope>FUNCTION</scope>
    <scope>SUBCELLULAR LOCATION</scope>
    <scope>C-TERMINAL ATTACHMENT TO PEPTIDOGLYCAN</scope>
    <source>
        <strain>B</strain>
    </source>
</reference>
<reference key="8">
    <citation type="journal article" date="1973" name="Eur. J. Biochem.">
        <title>Covalent binding of lipid to protein. Diglyceride and amide-linked fatty acid at the N-terminal end of the murein-lipoprotein of the Escherichia coli outer membrane.</title>
        <authorList>
            <person name="Hantke K."/>
            <person name="Braun V."/>
        </authorList>
    </citation>
    <scope>PROTEIN SEQUENCE OF 21-24</scope>
    <scope>DIACYLGLYCEROL AT CYS-21</scope>
    <scope>PALMITOYLATION AT CYS-21</scope>
    <scope>SUBCELLULAR LOCATION</scope>
    <source>
        <strain>B/r</strain>
    </source>
</reference>
<reference key="9">
    <citation type="journal article" date="1992" name="Proc. Natl. Acad. Sci. U.S.A.">
        <title>Poly(A) RNA in Escherichia coli: nucleotide sequence at the junction of the lpp transcript and the polyadenylate moiety.</title>
        <authorList>
            <person name="Cao G.J."/>
            <person name="Sarkar N."/>
        </authorList>
    </citation>
    <scope>NUCLEOTIDE SEQUENCE [GENOMIC DNA] OF 44-78</scope>
    <source>
        <strain>SK5726</strain>
    </source>
</reference>
<reference key="10">
    <citation type="journal article" date="1970" name="Eur. J. Biochem.">
        <title>The covalent murein-lipoprotein structure of the Escherichia coli cell wall. The attachment site of the lipoprotein on the murein.</title>
        <authorList>
            <person name="Braun V."/>
            <person name="Sieglin U."/>
        </authorList>
    </citation>
    <scope>PROTEIN SEQUENCE OF 77-78</scope>
    <scope>FUNCTION</scope>
    <scope>SUBCELLULAR LOCATION</scope>
    <scope>LIPID-ANCHOR</scope>
    <scope>C-TERMINAL ATTACHMENT TO PEPTIDOGLYCAN</scope>
    <source>
        <strain>B/r</strain>
        <strain>K12 / W945</strain>
    </source>
</reference>
<reference key="11">
    <citation type="journal article" date="1972" name="J. Biol. Chem.">
        <title>The assembly of a structural lipoprotein in the envelope of Escherichia coli.</title>
        <authorList>
            <person name="Inouye M."/>
            <person name="Shaw J."/>
            <person name="Shen C."/>
        </authorList>
    </citation>
    <scope>FUNCTION</scope>
    <scope>SUBCELLULAR LOCATION</scope>
    <scope>PEPTIDOGLYCAN-BOUND AND NON-BOUND FORMS</scope>
    <source>
        <strain>K12 / KL16</strain>
        <strain>K12 / MX74T2</strain>
    </source>
</reference>
<reference key="12">
    <citation type="journal article" date="1978" name="J. Bacteriol.">
        <title>Cell envelope and shape of Escherichia coli: multiple mutants missing the outer membrane lipoprotein and other major outer membrane proteins.</title>
        <authorList>
            <person name="Sonntag I."/>
            <person name="Schwarz H."/>
            <person name="Hirota Y."/>
            <person name="Henning U."/>
        </authorList>
    </citation>
    <scope>MUTANTS ALTER OUTER MEMBRANE SHAPE AND INTEGRITY</scope>
    <scope>DISRUPTION PHENOTYPE</scope>
</reference>
<reference evidence="20" key="13">
    <citation type="journal article" date="1986" name="J. Biol. Chem.">
        <title>Trimeric structure and localization of the major lipoprotein in the cell surface of Escherichia coli.</title>
        <authorList>
            <person name="Choi D.-S."/>
            <person name="Yamada H."/>
            <person name="Mizuno T."/>
            <person name="Mizushima S."/>
        </authorList>
    </citation>
    <scope>SUBUNIT</scope>
    <scope>INTERACTION WITH OMPA</scope>
    <scope>SUBCELLULAR LOCATION</scope>
    <source>
        <strain>K12 / SM1006</strain>
    </source>
</reference>
<reference key="14">
    <citation type="journal article" date="1992" name="J. Biol. Chem.">
        <title>Alterations of the carboxyl-terminal amino acid residues of Escherichia coli lipoprotein affect the formation of murein-bound lipoprotein.</title>
        <authorList>
            <person name="Zhang W.-Y."/>
            <person name="Wu H.C."/>
        </authorList>
    </citation>
    <scope>MUTAGENESIS OF ASP-70; LYS-75; TYR-76; ARG-77 AND LYS-78</scope>
    <source>
        <strain>K12</strain>
    </source>
</reference>
<reference key="15">
    <citation type="journal article" date="1997" name="Electrophoresis">
        <title>Escherichia coli proteome analysis using the gene-protein database.</title>
        <authorList>
            <person name="VanBogelen R.A."/>
            <person name="Abshire K.Z."/>
            <person name="Moldover B."/>
            <person name="Olson E.R."/>
            <person name="Neidhardt F.C."/>
        </authorList>
    </citation>
    <scope>IDENTIFICATION BY 2D-GEL</scope>
</reference>
<reference key="16">
    <citation type="journal article" date="1997" name="J. Bacteriol.">
        <title>Lethality of the covalent linkage between mislocalized major outer membrane lipoprotein and the peptidoglycan of Escherichia coli.</title>
        <authorList>
            <person name="Yakushi T."/>
            <person name="Tajima T."/>
            <person name="Matsuyama S."/>
            <person name="Tokuda H."/>
        </authorList>
    </citation>
    <scope>MUTAGENESIS OF SER-22</scope>
    <source>
        <strain>K12 / ATCC 35607 / JM83</strain>
    </source>
</reference>
<reference key="17">
    <citation type="journal article" date="1998" name="Mol. Microbiol.">
        <title>TolB protein of Escherichia coli K-12 interacts with the outer membrane peptidoglycan-associated proteins Pal, Lpp and OmpA.</title>
        <authorList>
            <person name="Clavel T."/>
            <person name="Germon P."/>
            <person name="Vianney A."/>
            <person name="Portalier R."/>
            <person name="Lazzaroni J.-C."/>
        </authorList>
    </citation>
    <scope>INTERACTION WITH TOLB</scope>
</reference>
<reference key="18">
    <citation type="journal article" date="2002" name="J. Bacteriol.">
        <title>Pal lipoprotein of Escherichia coli plays a major role in outer membrane integrity.</title>
        <authorList>
            <person name="Cascales E."/>
            <person name="Bernadac A."/>
            <person name="Gavioli M."/>
            <person name="Lazzaroni J.-C."/>
            <person name="Lloubes R."/>
        </authorList>
    </citation>
    <scope>INTERACTION WITH PAL</scope>
</reference>
<reference key="19">
    <citation type="journal article" date="2002" name="J. Bacteriol.">
        <title>TonB interacts with nonreceptor proteins in the outer membrane of Escherichia coli.</title>
        <authorList>
            <person name="Higgs P.I."/>
            <person name="Letain T.E."/>
            <person name="Merriam K.K."/>
            <person name="Burke N.S."/>
            <person name="Park H."/>
            <person name="Kang C."/>
            <person name="Postle K."/>
        </authorList>
    </citation>
    <scope>INTERACTION WITH TONB</scope>
    <source>
        <strain>K12 / W3110 / ATCC 27325 / DSM 5911</strain>
    </source>
</reference>
<reference key="20">
    <citation type="journal article" date="2004" name="J. Biol. Chem.">
        <title>Targeting and translocation of two lipoproteins in Escherichia coli via the SRP/Sec/YidC pathway.</title>
        <authorList>
            <person name="Froderberg L."/>
            <person name="Houben E.N."/>
            <person name="Baars L."/>
            <person name="Luirink J."/>
            <person name="de Gier J.W."/>
        </authorList>
    </citation>
    <scope>TRANSLOCATION BY SRP/SEC/YIDC PATHWAY</scope>
</reference>
<reference evidence="20" key="21">
    <citation type="journal article" date="2005" name="J. Biol. Chem.">
        <title>Protein complexes of the Escherichia coli cell envelope.</title>
        <authorList>
            <person name="Stenberg F."/>
            <person name="Chovanec P."/>
            <person name="Maslen S.L."/>
            <person name="Robinson C.V."/>
            <person name="Ilag L."/>
            <person name="von Heijne G."/>
            <person name="Daley D.O."/>
        </authorList>
    </citation>
    <scope>SUBUNIT</scope>
    <scope>SUBCELLULAR LOCATION</scope>
    <source>
        <strain>BL21-DE3</strain>
    </source>
</reference>
<reference key="22">
    <citation type="journal article" date="2011" name="Mol. Microbiol.">
        <title>The free and bound forms of Lpp occupy distinct subcellular locations in Escherichia coli.</title>
        <authorList>
            <person name="Cowles C.E."/>
            <person name="Li Y."/>
            <person name="Semmelhack M.F."/>
            <person name="Cristea I.M."/>
            <person name="Silhavy T.J."/>
        </authorList>
    </citation>
    <scope>SUBCELLULAR LOCATION OF NON-PEPTIDOGLYCAN-BOUND FORM</scope>
    <scope>MUTAGENESIS OF 37-LEU--ALA-57; 75-LYS--LYS-78 AND LYS-78</scope>
    <source>
        <strain>K12 / MC4100 / ATCC 35695 / DSM 6574</strain>
    </source>
</reference>
<reference key="23">
    <citation type="journal article" date="2014" name="Cell">
        <title>Quantifying absolute protein synthesis rates reveals principles underlying allocation of cellular resources.</title>
        <authorList>
            <person name="Li G.W."/>
            <person name="Burkhardt D."/>
            <person name="Gross C."/>
            <person name="Weissman J.S."/>
        </authorList>
    </citation>
    <scope>PROTEIN COPY NUMBER</scope>
    <source>
        <strain>K12 / MG1655 / ATCC 47076</strain>
    </source>
</reference>
<reference key="24">
    <citation type="journal article" date="2017" name="PLoS Biol.">
        <title>Communication across the bacterial cell envelope depends on the size of the periplasm.</title>
        <authorList>
            <person name="Asmar A.T."/>
            <person name="Ferreira J.L."/>
            <person name="Cohen E.J."/>
            <person name="Cho S.H."/>
            <person name="Beeby M."/>
            <person name="Hughes K.T."/>
            <person name="Collet J.F."/>
        </authorList>
    </citation>
    <scope>CONTROLS PERIPLASMIC WIDTH</scope>
    <scope>MUTAGENESIS OF GLN-43 AND LYS-78</scope>
    <source>
        <strain>K12 / MG1655 / ATCC 47076</strain>
    </source>
</reference>
<reference key="25">
    <citation type="journal article" date="2017" name="Biophys. J.">
        <title>Braun's lipoprotein facilitates OmpA interaction with the Escherichia coli cell wall.</title>
        <authorList>
            <person name="Samsudin F."/>
            <person name="Boags A."/>
            <person name="Piggot T.J."/>
            <person name="Khalid S."/>
        </authorList>
    </citation>
    <scope>MODELING OF FUNCTION</scope>
    <scope>DOMAIN</scope>
    <scope>PEPTIDOGLYCAN-BINDING</scope>
</reference>
<reference key="26">
    <citation type="journal article" date="2018" name="Int. J. Biol. Macromol.">
        <title>Identification of functional interactome of a key cell division regulatory protein CedA of E.coli.</title>
        <authorList>
            <person name="Sharma P."/>
            <person name="Tomar A.K."/>
            <person name="Kundu B."/>
        </authorList>
    </citation>
    <scope>INTERACTION WITH CEDA</scope>
</reference>
<reference key="27">
    <citation type="journal article" date="2019" name="Structure">
        <title>Binding from both sides: TolR and full-length OmpA bind and maintain the local structure of the E. coli cell wall.</title>
        <authorList>
            <person name="Boags A.T."/>
            <person name="Samsudin F."/>
            <person name="Khalid S."/>
        </authorList>
    </citation>
    <scope>MODELING OF FUNCTION</scope>
    <scope>DOMAIN</scope>
    <scope>PEPTIDOGLYCAN-BINDING</scope>
</reference>
<reference key="28">
    <citation type="journal article" date="1978" name="J. Mol. Biol.">
        <title>The double helix coiled coil structure of murein lipoprotein from Escherichia coli.</title>
        <authorList>
            <person name="McLachlan A.D."/>
        </authorList>
    </citation>
    <scope>3D-STRUCTURE MODELING</scope>
</reference>
<reference key="29">
    <citation type="journal article" date="2000" name="J. Mol. Biol.">
        <title>Core structure of the outer membrane lipoprotein from Escherichia coli at 1.9 A resolution.</title>
        <authorList>
            <person name="Shu W."/>
            <person name="Liu J."/>
            <person name="Ji H."/>
            <person name="Lu M."/>
        </authorList>
    </citation>
    <scope>X-RAY CRYSTALLOGRAPHY (1.9 ANGSTROMS) OF 22-77</scope>
    <scope>SUBUNIT</scope>
</reference>
<reference key="30">
    <citation type="journal article" date="2002" name="J. Biol. Chem.">
        <title>An alanine-zipper structure determined by long range intermolecular interactions.</title>
        <authorList>
            <person name="Liu J."/>
            <person name="Lu M."/>
        </authorList>
    </citation>
    <scope>X-RAY CRYSTALLOGRAPHY (1.3 ANGSTROMS) OF 22-71 OF MUTANT ALA-14</scope>
</reference>
<reference key="31">
    <citation type="journal article" date="2002" name="J. Mol. Biol.">
        <title>Core side-chain packing and backbone conformation in Lpp-56 coiled-coil mutants.</title>
        <authorList>
            <person name="Liu J."/>
            <person name="Cao W."/>
            <person name="Lu M."/>
        </authorList>
    </citation>
    <scope>X-RAY CRYSTALLOGRAPHY (1.65 ANGSTROMS) OF 22-77 OF MUTANTS ALA-5 AND ALA-7</scope>
</reference>
<reference key="32">
    <citation type="journal article" date="2003" name="Biochemistry">
        <title>Zinc-mediated helix capping in a triple-helical protein.</title>
        <authorList>
            <person name="Liu J."/>
            <person name="Dai J."/>
            <person name="Lu M."/>
        </authorList>
    </citation>
    <scope>X-RAY CRYSTALLOGRAPHY (1.7 ANGSTROMS) OF 22-77 OF MUTANT ALA-10(56)</scope>
</reference>
<reference key="33">
    <citation type="journal article" date="2004" name="Proc. Natl. Acad. Sci. U.S.A.">
        <title>Atomic structure of a tryptophan-zipper pentamer.</title>
        <authorList>
            <person name="Liu J."/>
            <person name="Yong W."/>
            <person name="Deng Y."/>
            <person name="Kallenbach N.R."/>
            <person name="Lu M."/>
        </authorList>
    </citation>
    <scope>X-RAY CRYSTALLOGRAPHY (1.45 ANGSTROMS) OF 22-73 OF MUTANT TRP-14</scope>
</reference>
<feature type="signal peptide" evidence="1 14 16">
    <location>
        <begin position="1"/>
        <end position="20"/>
    </location>
</feature>
<feature type="chain" id="PRO_0000018331" description="Major outer membrane lipoprotein Lpp" evidence="1">
    <location>
        <begin position="21"/>
        <end position="78"/>
    </location>
</feature>
<feature type="repeat" evidence="1">
    <location>
        <begin position="24"/>
        <end position="34"/>
    </location>
</feature>
<feature type="repeat" evidence="1">
    <location>
        <begin position="38"/>
        <end position="48"/>
    </location>
</feature>
<feature type="coiled-coil region" evidence="1">
    <location>
        <begin position="27"/>
        <end position="75"/>
    </location>
</feature>
<feature type="modified residue" description="N-formylmethionine" evidence="11">
    <location>
        <position position="1"/>
    </location>
</feature>
<feature type="modified residue" description="N6-murein peptidoglycan lysine" evidence="1 13 14">
    <location>
        <position position="78"/>
    </location>
</feature>
<feature type="lipid moiety-binding region" description="N-palmitoyl cysteine" evidence="1 16">
    <location>
        <position position="21"/>
    </location>
</feature>
<feature type="lipid moiety-binding region" description="S-diacylglycerol cysteine" evidence="1 16">
    <location>
        <position position="21"/>
    </location>
</feature>
<feature type="sequence variant" description="In strain: B." evidence="14">
    <original>Q</original>
    <variation>E</variation>
    <location>
        <position position="29"/>
    </location>
</feature>
<feature type="mutagenesis site" description="Localizes to the inner membrane, where it associates with peptidoglycan, thereby preventing separation of the two membranes. Prolonged expression is lethal for the cell." evidence="17">
    <original>S</original>
    <variation>D</variation>
    <location>
        <position position="22"/>
    </location>
</feature>
<feature type="mutagenesis site" description="Does not affect the formation of murein-bound lipoprotein, has almost no surface-exposed Lpp. Cells are mucoid." evidence="6">
    <location>
        <begin position="37"/>
        <end position="57"/>
    </location>
</feature>
<feature type="mutagenesis site" description="Periplasm is 4 nm larger than wild-type, cells no longer trigger Rcs system." evidence="9">
    <original>Q</original>
    <variation>TLSAKVEQLSNDVNAMRSDVDQ</variation>
    <location>
        <position position="43"/>
    </location>
</feature>
<feature type="mutagenesis site" description="Periplasm is 3 nm larger than wild-type, cells no longer trigger Rcs system." evidence="9">
    <original>Q</original>
    <variation>TLSAKVEQLSNDVNQ</variation>
    <location>
        <position position="43"/>
    </location>
</feature>
<feature type="mutagenesis site" description="Does not affect the formation of murein-bound lipoprotein." evidence="4">
    <original>D</original>
    <variation>E</variation>
    <variation>G</variation>
    <variation>S</variation>
    <location>
        <position position="70"/>
    </location>
</feature>
<feature type="mutagenesis site" description="Protein is no longer biotinylated on the cell surface." evidence="6">
    <location>
        <begin position="75"/>
        <end position="78"/>
    </location>
</feature>
<feature type="mutagenesis site" description="Does not affect the formation of murein-bound lipoprotein." evidence="4">
    <original>K</original>
    <variation>S</variation>
    <variation>T</variation>
    <location>
        <position position="75"/>
    </location>
</feature>
<feature type="mutagenesis site" description="Reduces the formation of murein-bound lipoprotein." evidence="4">
    <original>Y</original>
    <variation>C</variation>
    <variation>D</variation>
    <variation>E</variation>
    <variation>G</variation>
    <variation>N</variation>
    <variation>P</variation>
    <variation>S</variation>
    <location>
        <position position="76"/>
    </location>
</feature>
<feature type="mutagenesis site" description="Does not affect the formation of murein-bound lipoprotein." evidence="4">
    <original>Y</original>
    <variation>F</variation>
    <variation>H</variation>
    <variation>I</variation>
    <variation>L</variation>
    <location>
        <position position="76"/>
    </location>
</feature>
<feature type="mutagenesis site" description="Reduces the formation of murein-bound lipoprotein." evidence="4">
    <original>R</original>
    <variation>D</variation>
    <variation>L</variation>
    <location>
        <position position="77"/>
    </location>
</feature>
<feature type="mutagenesis site" description="Abolishes the formation of murein-bound lipoprotein. Reduced biotinylation on the cell surface." evidence="4 6">
    <original>K</original>
    <variation>R</variation>
    <location>
        <position position="78"/>
    </location>
</feature>
<feature type="mutagenesis site" description="Cells no longer trigger Rcs system, outer membrane forms blebs, periplasm is about 3 nm larger than wild-type." evidence="9">
    <location>
        <position position="78"/>
    </location>
</feature>
<feature type="helix" evidence="28">
    <location>
        <begin position="25"/>
        <end position="71"/>
    </location>
</feature>
<sequence length="78" mass="8323">MKATKLVLGAVILGSTLLAGCSSNAKIDQLSSDVQTLNAKVDQLSNDVNAMRSDVQAAKDDAARANQRLDNMATKYRK</sequence>
<accession>P69776</accession>
<accession>P02937</accession>
<accession>Q53272</accession>
<name>LPP_ECOLI</name>
<comment type="function">
    <text evidence="6 7 9 10 13 14 15 23 25">An outer membrane lipoprotein that controls the distance between the inner and outer membranes; adding residues to Lpp increases the width of the periplasm (PubMed:29257832). The only protein known to be covalently linked to the peptidoglycan network (PGN) (PubMed:3013869, PubMed:4245367, PubMed:4261992). Also non-covalently binds the PGN (PubMed:3013869). The link between the cell outer membrane and PGN contributes to the maintenance of the structural and functional integrity of the cell envelope, and maintains the correct distance between the PGN and the outer membrane (PubMed:3013869, PubMed:4245367, PubMed:4261992, PubMed:4565677). The most abundant cellular protein in terms of copy number, there can be up to one million Lpp molecules per cell (PubMed:24766808). About one-third of Lpp is bound to the PGN (called bound or periplasmic) the rest is called free or transmembrane (PubMed:4565677). The 'free' form can be surface labeled by membrane impermeable agents and so must cross the outer membrane; it is thought that this transmembrane form is still anchored in the inner leaflet of the outer membrane (PubMed:21219470). Modeling suggests that non-covalent binding of OmpA (from the outer membrane) and TolR (from the inner membrane) to peptidoglycan maintains the position of the cell wall in the periplasm, holding it approximately equidistant from both the inner and outer membranes. Trimeric Lpp controls the width of the periplasm, adjusts its tilt angle to accommodate to the available space, and can compensate in part for an absence of OmpA (Probable). The role of the cell surface-exposed, free form (transmembrane) of Lpp is unknown (PubMed:21219470).</text>
</comment>
<comment type="subunit">
    <text evidence="2 5 8 10 18">Homotrimer (PubMed:10843861, PubMed:3013869). Interacts with OmpA (PubMed:3013869). Has been isolated from outer membrane preparations as an approximately 87 kDa complex, suggesting it also forms larger complexes (PubMed:16079137). Seems to interact with TolB, Pal and TonB (PubMed:9701827). In pull-down experiments interacts with CedA (PubMed:28818726).</text>
</comment>
<comment type="interaction">
    <interactant intactId="EBI-909750">
        <id>P69776</id>
    </interactant>
    <interactant intactId="EBI-909750">
        <id>P69776</id>
        <label>lpp</label>
    </interactant>
    <organismsDiffer>false</organismsDiffer>
    <experiments>2</experiments>
</comment>
<comment type="interaction">
    <interactant intactId="EBI-909750">
        <id>P69776</id>
    </interactant>
    <interactant intactId="EBI-6399993">
        <id>P02929</id>
        <label>tonB</label>
    </interactant>
    <organismsDiffer>false</organismsDiffer>
    <experiments>2</experiments>
</comment>
<comment type="subcellular location">
    <subcellularLocation>
        <location evidence="1 10 26">Cell outer membrane</location>
        <topology evidence="1 10 13 16">Lipid-anchor</topology>
        <orientation evidence="1 16">Periplasmic side</orientation>
    </subcellularLocation>
    <subcellularLocation>
        <location evidence="1 5 13 15">Secreted</location>
        <location evidence="1 5 13 15">Cell wall</location>
        <topology evidence="1 13 14 15 21">Peptidoglycan-anchor</topology>
    </subcellularLocation>
    <subcellularLocation>
        <location evidence="6">Cell outer membrane</location>
        <topology evidence="22">Lipid-anchor</topology>
        <orientation evidence="6">Extracellular side</orientation>
    </subcellularLocation>
    <text evidence="3 6 13 14 15 16 24 27">Attached via its lipidated N-terminus to the inner leaflet of the outer membrane (PubMed:4575979). Attached to the peptidoglycan network (PGN) via its C-terminus (Probable) (PubMed:4245367, PubMed:4261992). About one-third of the protein links the outer membrane and the PGN, the rest is not-linked to PGN. PGN-bound and non-bound forms can interconvert (PubMed:4565677). The C-terminus of the non-PGN-bound form is exposed on the cell surface; its N-terminus is probably anchored in the inner leaflet (PubMed:21219470). Targeted by the SRP/Sec/YidC pathway (PubMed:15140892).</text>
</comment>
<comment type="disruption phenotype">
    <text evidence="12">Double lpp-ompA mutants are spherical and only grow in the presence of electrolytes such as 30 mM Mg(2+), and are sensitive to hydrophobic antibiotics and detergents. The peptidoglycan layer is no longer attached to the cell outer membrane which undergoes abundant blebbing.</text>
</comment>
<comment type="miscellaneous">
    <text evidence="15">About one-third of Lpp is covalently bound to peptidoglycan.</text>
</comment>
<comment type="similarity">
    <text evidence="1">Belongs to the Lpp family.</text>
</comment>
<proteinExistence type="evidence at protein level"/>
<gene>
    <name evidence="1" type="primary">lpp</name>
    <name type="synonym">mlpA</name>
    <name type="synonym">mulI</name>
    <name type="ordered locus">b1677</name>
    <name type="ordered locus">JW1667</name>
</gene>
<protein>
    <recommendedName>
        <fullName evidence="1">Major outer membrane lipoprotein Lpp</fullName>
    </recommendedName>
    <alternativeName>
        <fullName evidence="1">Braun lipoprotein</fullName>
        <shortName evidence="1">BLP</shortName>
    </alternativeName>
    <alternativeName>
        <fullName evidence="1 19">Murein-lipoprotein</fullName>
    </alternativeName>
</protein>
<keyword id="KW-0002">3D-structure</keyword>
<keyword id="KW-0998">Cell outer membrane</keyword>
<keyword id="KW-0134">Cell wall</keyword>
<keyword id="KW-0175">Coiled coil</keyword>
<keyword id="KW-0903">Direct protein sequencing</keyword>
<keyword id="KW-0291">Formylation</keyword>
<keyword id="KW-0449">Lipoprotein</keyword>
<keyword id="KW-0472">Membrane</keyword>
<keyword id="KW-0564">Palmitate</keyword>
<keyword id="KW-0572">Peptidoglycan-anchor</keyword>
<keyword id="KW-1185">Reference proteome</keyword>
<keyword id="KW-0677">Repeat</keyword>
<keyword id="KW-0964">Secreted</keyword>
<keyword id="KW-0732">Signal</keyword>
<organism>
    <name type="scientific">Escherichia coli (strain K12)</name>
    <dbReference type="NCBI Taxonomy" id="83333"/>
    <lineage>
        <taxon>Bacteria</taxon>
        <taxon>Pseudomonadati</taxon>
        <taxon>Pseudomonadota</taxon>
        <taxon>Gammaproteobacteria</taxon>
        <taxon>Enterobacterales</taxon>
        <taxon>Enterobacteriaceae</taxon>
        <taxon>Escherichia</taxon>
    </lineage>
</organism>
<dbReference type="EMBL" id="V00302">
    <property type="protein sequence ID" value="CAA23580.1"/>
    <property type="molecule type" value="Genomic_DNA"/>
</dbReference>
<dbReference type="EMBL" id="X68953">
    <property type="protein sequence ID" value="CAA48767.1"/>
    <property type="molecule type" value="Genomic_DNA"/>
</dbReference>
<dbReference type="EMBL" id="U00096">
    <property type="protein sequence ID" value="AAC74747.1"/>
    <property type="molecule type" value="Genomic_DNA"/>
</dbReference>
<dbReference type="EMBL" id="AP009048">
    <property type="protein sequence ID" value="BAA16044.1"/>
    <property type="molecule type" value="Genomic_DNA"/>
</dbReference>
<dbReference type="EMBL" id="S42225">
    <property type="protein sequence ID" value="AAB22836.1"/>
    <property type="molecule type" value="mRNA"/>
</dbReference>
<dbReference type="PIR" id="A90783">
    <property type="entry name" value="LPECW"/>
</dbReference>
<dbReference type="RefSeq" id="NP_416192.1">
    <property type="nucleotide sequence ID" value="NC_000913.3"/>
</dbReference>
<dbReference type="RefSeq" id="WP_000648420.1">
    <property type="nucleotide sequence ID" value="NZ_STEB01000003.1"/>
</dbReference>
<dbReference type="PDB" id="1EQ7">
    <property type="method" value="X-ray"/>
    <property type="resolution" value="1.90 A"/>
    <property type="chains" value="A=22-77"/>
</dbReference>
<dbReference type="PDB" id="1JCC">
    <property type="method" value="X-ray"/>
    <property type="resolution" value="1.70 A"/>
    <property type="chains" value="A/B/C=22-77"/>
</dbReference>
<dbReference type="PDB" id="1JCD">
    <property type="method" value="X-ray"/>
    <property type="resolution" value="1.30 A"/>
    <property type="chains" value="A/B/C=22-73"/>
</dbReference>
<dbReference type="PDB" id="1KFM">
    <property type="method" value="X-ray"/>
    <property type="resolution" value="2.00 A"/>
    <property type="chains" value="A=22-77"/>
</dbReference>
<dbReference type="PDB" id="1KFN">
    <property type="method" value="X-ray"/>
    <property type="resolution" value="1.65 A"/>
    <property type="chains" value="A=22-77"/>
</dbReference>
<dbReference type="PDB" id="1T8Z">
    <property type="method" value="X-ray"/>
    <property type="resolution" value="1.45 A"/>
    <property type="chains" value="A/B/C/D/E=22-74"/>
</dbReference>
<dbReference type="PDB" id="2GUS">
    <property type="method" value="X-ray"/>
    <property type="resolution" value="1.75 A"/>
    <property type="chains" value="A=22-77"/>
</dbReference>
<dbReference type="PDB" id="2GUV">
    <property type="method" value="X-ray"/>
    <property type="resolution" value="1.40 A"/>
    <property type="chains" value="A/B/C/D/E=22-77"/>
</dbReference>
<dbReference type="PDB" id="7ARH">
    <property type="method" value="EM"/>
    <property type="resolution" value="3.30 A"/>
    <property type="chains" value="V=21-30"/>
</dbReference>
<dbReference type="PDB" id="7ARJ">
    <property type="method" value="EM"/>
    <property type="resolution" value="3.20 A"/>
    <property type="chains" value="V=21-30"/>
</dbReference>
<dbReference type="PDB" id="7ARL">
    <property type="method" value="EM"/>
    <property type="resolution" value="3.20 A"/>
    <property type="chains" value="V=21-30"/>
</dbReference>
<dbReference type="PDB" id="7ARM">
    <property type="method" value="EM"/>
    <property type="resolution" value="3.60 A"/>
    <property type="chains" value="V=21-30"/>
</dbReference>
<dbReference type="PDB" id="9GRC">
    <property type="method" value="EM"/>
    <property type="resolution" value="3.50 A"/>
    <property type="chains" value="V=21-30"/>
</dbReference>
<dbReference type="PDBsum" id="1EQ7"/>
<dbReference type="PDBsum" id="1JCC"/>
<dbReference type="PDBsum" id="1JCD"/>
<dbReference type="PDBsum" id="1KFM"/>
<dbReference type="PDBsum" id="1KFN"/>
<dbReference type="PDBsum" id="1T8Z"/>
<dbReference type="PDBsum" id="2GUS"/>
<dbReference type="PDBsum" id="2GUV"/>
<dbReference type="PDBsum" id="7ARH"/>
<dbReference type="PDBsum" id="7ARJ"/>
<dbReference type="PDBsum" id="7ARL"/>
<dbReference type="PDBsum" id="7ARM"/>
<dbReference type="PDBsum" id="9GRC"/>
<dbReference type="EMDB" id="EMD-11882"/>
<dbReference type="EMDB" id="EMD-11884"/>
<dbReference type="EMDB" id="EMD-11886"/>
<dbReference type="EMDB" id="EMD-11887"/>
<dbReference type="SMR" id="P69776"/>
<dbReference type="BioGRID" id="4260276">
    <property type="interactions" value="199"/>
</dbReference>
<dbReference type="DIP" id="DIP-35674N"/>
<dbReference type="FunCoup" id="P69776">
    <property type="interactions" value="55"/>
</dbReference>
<dbReference type="IntAct" id="P69776">
    <property type="interactions" value="6"/>
</dbReference>
<dbReference type="STRING" id="511145.b1677"/>
<dbReference type="TCDB" id="8.A.99.1.1">
    <property type="family name" value="the blp braun's lipoprotein (lpp) family"/>
</dbReference>
<dbReference type="jPOST" id="P69776"/>
<dbReference type="PaxDb" id="511145-b1677"/>
<dbReference type="EnsemblBacteria" id="AAC74747">
    <property type="protein sequence ID" value="AAC74747"/>
    <property type="gene ID" value="b1677"/>
</dbReference>
<dbReference type="GeneID" id="93775832"/>
<dbReference type="GeneID" id="946175"/>
<dbReference type="KEGG" id="ecj:JW1667"/>
<dbReference type="KEGG" id="eco:b1677"/>
<dbReference type="KEGG" id="ecoc:C3026_09610"/>
<dbReference type="PATRIC" id="fig|1411691.4.peg.581"/>
<dbReference type="EchoBASE" id="EB0539"/>
<dbReference type="eggNOG" id="COG4238">
    <property type="taxonomic scope" value="Bacteria"/>
</dbReference>
<dbReference type="HOGENOM" id="CLU_166934_2_1_6"/>
<dbReference type="InParanoid" id="P69776"/>
<dbReference type="OMA" id="ANDRIDN"/>
<dbReference type="OrthoDB" id="6567756at2"/>
<dbReference type="PhylomeDB" id="P69776"/>
<dbReference type="BioCyc" id="EcoCyc:EG10544-MONOMER"/>
<dbReference type="EvolutionaryTrace" id="P69776"/>
<dbReference type="PRO" id="PR:P69776"/>
<dbReference type="Proteomes" id="UP000000625">
    <property type="component" value="Chromosome"/>
</dbReference>
<dbReference type="GO" id="GO:0009279">
    <property type="term" value="C:cell outer membrane"/>
    <property type="evidence" value="ECO:0000303"/>
    <property type="project" value="UniProtKB"/>
</dbReference>
<dbReference type="GO" id="GO:0005576">
    <property type="term" value="C:extracellular region"/>
    <property type="evidence" value="ECO:0007669"/>
    <property type="project" value="UniProtKB-KW"/>
</dbReference>
<dbReference type="GO" id="GO:0016020">
    <property type="term" value="C:membrane"/>
    <property type="evidence" value="ECO:0007005"/>
    <property type="project" value="UniProtKB"/>
</dbReference>
<dbReference type="GO" id="GO:0030288">
    <property type="term" value="C:outer membrane-bounded periplasmic space"/>
    <property type="evidence" value="ECO:0000314"/>
    <property type="project" value="EcoCyc"/>
</dbReference>
<dbReference type="GO" id="GO:0042802">
    <property type="term" value="F:identical protein binding"/>
    <property type="evidence" value="ECO:0000353"/>
    <property type="project" value="IntAct"/>
</dbReference>
<dbReference type="GO" id="GO:0008289">
    <property type="term" value="F:lipid binding"/>
    <property type="evidence" value="ECO:0000303"/>
    <property type="project" value="UniProtKB"/>
</dbReference>
<dbReference type="GO" id="GO:0042834">
    <property type="term" value="F:peptidoglycan binding"/>
    <property type="evidence" value="ECO:0000304"/>
    <property type="project" value="UniProtKB"/>
</dbReference>
<dbReference type="GO" id="GO:0030258">
    <property type="term" value="P:lipid modification"/>
    <property type="evidence" value="ECO:0000315"/>
    <property type="project" value="UniProtKB"/>
</dbReference>
<dbReference type="GO" id="GO:0043580">
    <property type="term" value="P:periplasmic space organization"/>
    <property type="evidence" value="ECO:0000314"/>
    <property type="project" value="EcoCyc"/>
</dbReference>
<dbReference type="FunFam" id="1.20.5.190:FF:000002">
    <property type="entry name" value="Major outer membrane lipoprotein"/>
    <property type="match status" value="1"/>
</dbReference>
<dbReference type="Gene3D" id="1.20.5.190">
    <property type="match status" value="1"/>
</dbReference>
<dbReference type="HAMAP" id="MF_00843">
    <property type="entry name" value="Lpp"/>
    <property type="match status" value="1"/>
</dbReference>
<dbReference type="InterPro" id="IPR006817">
    <property type="entry name" value="Lipoprotein_leucine-zipper_dom"/>
</dbReference>
<dbReference type="InterPro" id="IPR016367">
    <property type="entry name" value="MOM_Lpp"/>
</dbReference>
<dbReference type="NCBIfam" id="NF040598">
    <property type="entry name" value="Ala_zip_lipo"/>
    <property type="match status" value="1"/>
</dbReference>
<dbReference type="NCBIfam" id="NF011925">
    <property type="entry name" value="PRK15396.1"/>
    <property type="match status" value="1"/>
</dbReference>
<dbReference type="PANTHER" id="PTHR38763:SF1">
    <property type="entry name" value="MAJOR OUTER MEMBRANE LIPOPROTEIN LPP"/>
    <property type="match status" value="1"/>
</dbReference>
<dbReference type="PANTHER" id="PTHR38763">
    <property type="entry name" value="MAJOR OUTER MEMBRANE PROLIPOPROTEIN LPP"/>
    <property type="match status" value="1"/>
</dbReference>
<dbReference type="Pfam" id="PF04728">
    <property type="entry name" value="LPP"/>
    <property type="match status" value="1"/>
</dbReference>
<dbReference type="PIRSF" id="PIRSF002855">
    <property type="entry name" value="Murein-lipoprotein"/>
    <property type="match status" value="1"/>
</dbReference>
<dbReference type="SUPFAM" id="SSF58042">
    <property type="entry name" value="Outer membrane lipoprotein"/>
    <property type="match status" value="1"/>
</dbReference>
<dbReference type="PROSITE" id="PS51257">
    <property type="entry name" value="PROKAR_LIPOPROTEIN"/>
    <property type="match status" value="1"/>
</dbReference>
<evidence type="ECO:0000255" key="1">
    <source>
        <dbReference type="HAMAP-Rule" id="MF_00843"/>
    </source>
</evidence>
<evidence type="ECO:0000269" key="2">
    <source>
    </source>
</evidence>
<evidence type="ECO:0000269" key="3">
    <source>
    </source>
</evidence>
<evidence type="ECO:0000269" key="4">
    <source>
    </source>
</evidence>
<evidence type="ECO:0000269" key="5">
    <source>
    </source>
</evidence>
<evidence type="ECO:0000269" key="6">
    <source>
    </source>
</evidence>
<evidence type="ECO:0000269" key="7">
    <source>
    </source>
</evidence>
<evidence type="ECO:0000269" key="8">
    <source>
    </source>
</evidence>
<evidence type="ECO:0000269" key="9">
    <source>
    </source>
</evidence>
<evidence type="ECO:0000269" key="10">
    <source>
    </source>
</evidence>
<evidence type="ECO:0000269" key="11">
    <source>
    </source>
</evidence>
<evidence type="ECO:0000269" key="12">
    <source>
    </source>
</evidence>
<evidence type="ECO:0000269" key="13">
    <source>
    </source>
</evidence>
<evidence type="ECO:0000269" key="14">
    <source>
    </source>
</evidence>
<evidence type="ECO:0000269" key="15">
    <source>
    </source>
</evidence>
<evidence type="ECO:0000269" key="16">
    <source>
    </source>
</evidence>
<evidence type="ECO:0000269" key="17">
    <source>
    </source>
</evidence>
<evidence type="ECO:0000269" key="18">
    <source>
    </source>
</evidence>
<evidence type="ECO:0000303" key="19">
    <source>
    </source>
</evidence>
<evidence type="ECO:0000305" key="20"/>
<evidence type="ECO:0000305" key="21">
    <source>
    </source>
</evidence>
<evidence type="ECO:0000305" key="22">
    <source>
    </source>
</evidence>
<evidence type="ECO:0000305" key="23">
    <source>
    </source>
</evidence>
<evidence type="ECO:0000305" key="24">
    <source>
    </source>
</evidence>
<evidence type="ECO:0000305" key="25">
    <source>
    </source>
</evidence>
<evidence type="ECO:0000305" key="26">
    <source>
    </source>
</evidence>
<evidence type="ECO:0000305" key="27">
    <source>
    </source>
</evidence>
<evidence type="ECO:0007829" key="28">
    <source>
        <dbReference type="PDB" id="1JCD"/>
    </source>
</evidence>